<keyword id="KW-0256">Endoplasmic reticulum</keyword>
<keyword id="KW-0551">Lipid droplet</keyword>
<keyword id="KW-0472">Membrane</keyword>
<keyword id="KW-1185">Reference proteome</keyword>
<protein>
    <recommendedName>
        <fullName evidence="3">Lipid droplet-regulating VLDL assembly factor AUP1 homolog</fullName>
    </recommendedName>
    <alternativeName>
        <fullName evidence="3">Ancient ubiquitous protein 1 homolog</fullName>
    </alternativeName>
</protein>
<dbReference type="EMBL" id="FO080400">
    <property type="protein sequence ID" value="CCD63448.1"/>
    <property type="molecule type" value="Genomic_DNA"/>
</dbReference>
<dbReference type="PIR" id="S44813">
    <property type="entry name" value="S44813"/>
</dbReference>
<dbReference type="RefSeq" id="NP_498746.1">
    <property type="nucleotide sequence ID" value="NM_066345.8"/>
</dbReference>
<dbReference type="SMR" id="P34426"/>
<dbReference type="BioGRID" id="41333">
    <property type="interactions" value="1"/>
</dbReference>
<dbReference type="FunCoup" id="P34426">
    <property type="interactions" value="1502"/>
</dbReference>
<dbReference type="STRING" id="6239.F44B9.5.1"/>
<dbReference type="PaxDb" id="6239-F44B9.5"/>
<dbReference type="PeptideAtlas" id="P34426"/>
<dbReference type="EnsemblMetazoa" id="F44B9.5.1">
    <property type="protein sequence ID" value="F44B9.5.1"/>
    <property type="gene ID" value="WBGene00018408"/>
</dbReference>
<dbReference type="GeneID" id="176127"/>
<dbReference type="KEGG" id="cel:CELE_F44B9.5"/>
<dbReference type="UCSC" id="F44B9.5.1">
    <property type="organism name" value="c. elegans"/>
</dbReference>
<dbReference type="AGR" id="WB:WBGene00018408"/>
<dbReference type="CTD" id="176127"/>
<dbReference type="WormBase" id="F44B9.5">
    <property type="protein sequence ID" value="CE24973"/>
    <property type="gene ID" value="WBGene00018408"/>
</dbReference>
<dbReference type="eggNOG" id="KOG2898">
    <property type="taxonomic scope" value="Eukaryota"/>
</dbReference>
<dbReference type="GeneTree" id="ENSGT00390000016110"/>
<dbReference type="HOGENOM" id="CLU_045696_0_0_1"/>
<dbReference type="InParanoid" id="P34426"/>
<dbReference type="OMA" id="KFNSWPF"/>
<dbReference type="OrthoDB" id="1854593at2759"/>
<dbReference type="PhylomeDB" id="P34426"/>
<dbReference type="PRO" id="PR:P34426"/>
<dbReference type="Proteomes" id="UP000001940">
    <property type="component" value="Chromosome III"/>
</dbReference>
<dbReference type="Bgee" id="WBGene00018408">
    <property type="expression patterns" value="Expressed in germ line (C elegans) and 4 other cell types or tissues"/>
</dbReference>
<dbReference type="GO" id="GO:0005789">
    <property type="term" value="C:endoplasmic reticulum membrane"/>
    <property type="evidence" value="ECO:0007669"/>
    <property type="project" value="UniProtKB-SubCell"/>
</dbReference>
<dbReference type="GO" id="GO:0005811">
    <property type="term" value="C:lipid droplet"/>
    <property type="evidence" value="ECO:0007669"/>
    <property type="project" value="UniProtKB-SubCell"/>
</dbReference>
<dbReference type="GO" id="GO:0016746">
    <property type="term" value="F:acyltransferase activity"/>
    <property type="evidence" value="ECO:0007669"/>
    <property type="project" value="InterPro"/>
</dbReference>
<dbReference type="GO" id="GO:0043130">
    <property type="term" value="F:ubiquitin binding"/>
    <property type="evidence" value="ECO:0007669"/>
    <property type="project" value="InterPro"/>
</dbReference>
<dbReference type="FunFam" id="1.10.8.10:FF:000176">
    <property type="entry name" value="Ancient ubiquitous protein 1 homolog"/>
    <property type="match status" value="1"/>
</dbReference>
<dbReference type="Gene3D" id="1.10.8.10">
    <property type="entry name" value="DNA helicase RuvA subunit, C-terminal domain"/>
    <property type="match status" value="1"/>
</dbReference>
<dbReference type="InterPro" id="IPR003892">
    <property type="entry name" value="CUE"/>
</dbReference>
<dbReference type="InterPro" id="IPR002123">
    <property type="entry name" value="Plipid/glycerol_acylTrfase"/>
</dbReference>
<dbReference type="PANTHER" id="PTHR15486">
    <property type="entry name" value="ANCIENT UBIQUITOUS PROTEIN"/>
    <property type="match status" value="1"/>
</dbReference>
<dbReference type="PANTHER" id="PTHR15486:SF96">
    <property type="entry name" value="LIPID DROPLET-REGULATING VLDL ASSEMBLY FACTOR AUP1"/>
    <property type="match status" value="1"/>
</dbReference>
<dbReference type="SMART" id="SM00546">
    <property type="entry name" value="CUE"/>
    <property type="match status" value="1"/>
</dbReference>
<dbReference type="SMART" id="SM00563">
    <property type="entry name" value="PlsC"/>
    <property type="match status" value="1"/>
</dbReference>
<dbReference type="SUPFAM" id="SSF69593">
    <property type="entry name" value="Glycerol-3-phosphate (1)-acyltransferase"/>
    <property type="match status" value="1"/>
</dbReference>
<dbReference type="PROSITE" id="PS51140">
    <property type="entry name" value="CUE"/>
    <property type="match status" value="1"/>
</dbReference>
<gene>
    <name evidence="4" type="ORF">F44B9.5</name>
</gene>
<feature type="chain" id="PRO_0000065340" description="Lipid droplet-regulating VLDL assembly factor AUP1 homolog">
    <location>
        <begin position="1"/>
        <end position="390"/>
    </location>
</feature>
<feature type="topological domain" description="Cytoplasmic" evidence="1">
    <location>
        <begin position="1"/>
        <end position="32"/>
    </location>
</feature>
<feature type="intramembrane region" evidence="1">
    <location>
        <begin position="33"/>
        <end position="53"/>
    </location>
</feature>
<feature type="topological domain" description="Cytoplasmic" evidence="1">
    <location>
        <begin position="54"/>
        <end position="390"/>
    </location>
</feature>
<feature type="domain" description="CUE" evidence="2">
    <location>
        <begin position="305"/>
        <end position="347"/>
    </location>
</feature>
<comment type="subcellular location">
    <subcellularLocation>
        <location evidence="1">Endoplasmic reticulum membrane</location>
        <topology evidence="1">Peripheral membrane protein</topology>
    </subcellularLocation>
    <subcellularLocation>
        <location evidence="1">Lipid droplet</location>
    </subcellularLocation>
</comment>
<comment type="similarity">
    <text evidence="3">Belongs to the AUP1 family.</text>
</comment>
<accession>P34426</accession>
<reference key="1">
    <citation type="journal article" date="1994" name="Nature">
        <title>2.2 Mb of contiguous nucleotide sequence from chromosome III of C. elegans.</title>
        <authorList>
            <person name="Wilson R."/>
            <person name="Ainscough R."/>
            <person name="Anderson K."/>
            <person name="Baynes C."/>
            <person name="Berks M."/>
            <person name="Bonfield J."/>
            <person name="Burton J."/>
            <person name="Connell M."/>
            <person name="Copsey T."/>
            <person name="Cooper J."/>
            <person name="Coulson A."/>
            <person name="Craxton M."/>
            <person name="Dear S."/>
            <person name="Du Z."/>
            <person name="Durbin R."/>
            <person name="Favello A."/>
            <person name="Fraser A."/>
            <person name="Fulton L."/>
            <person name="Gardner A."/>
            <person name="Green P."/>
            <person name="Hawkins T."/>
            <person name="Hillier L."/>
            <person name="Jier M."/>
            <person name="Johnston L."/>
            <person name="Jones M."/>
            <person name="Kershaw J."/>
            <person name="Kirsten J."/>
            <person name="Laisster N."/>
            <person name="Latreille P."/>
            <person name="Lightning J."/>
            <person name="Lloyd C."/>
            <person name="Mortimore B."/>
            <person name="O'Callaghan M."/>
            <person name="Parsons J."/>
            <person name="Percy C."/>
            <person name="Rifken L."/>
            <person name="Roopra A."/>
            <person name="Saunders D."/>
            <person name="Shownkeen R."/>
            <person name="Sims M."/>
            <person name="Smaldon N."/>
            <person name="Smith A."/>
            <person name="Smith M."/>
            <person name="Sonnhammer E."/>
            <person name="Staden R."/>
            <person name="Sulston J."/>
            <person name="Thierry-Mieg J."/>
            <person name="Thomas K."/>
            <person name="Vaudin M."/>
            <person name="Vaughan K."/>
            <person name="Waterston R."/>
            <person name="Watson A."/>
            <person name="Weinstock L."/>
            <person name="Wilkinson-Sproat J."/>
            <person name="Wohldman P."/>
        </authorList>
    </citation>
    <scope>NUCLEOTIDE SEQUENCE [LARGE SCALE GENOMIC DNA]</scope>
    <source>
        <strain>Bristol N2</strain>
    </source>
</reference>
<reference key="2">
    <citation type="journal article" date="1998" name="Science">
        <title>Genome sequence of the nematode C. elegans: a platform for investigating biology.</title>
        <authorList>
            <consortium name="The C. elegans sequencing consortium"/>
        </authorList>
    </citation>
    <scope>NUCLEOTIDE SEQUENCE [LARGE SCALE GENOMIC DNA]</scope>
    <source>
        <strain>Bristol N2</strain>
    </source>
</reference>
<sequence length="390" mass="44227">MASPEASSSGNTEDLRIEDLFHQKRNEDTIAKIFSIIYAPVGLIILLIRVFLGFHTFIVACLLRKSAALRMHTLRIMCSILGIVVEKSGHRDESARVLCANHVSILDHLAVDILTPCLLPSVWDIPSIIRWCFGYVDLGATRGRDQLVSRAKQLLTREQMPLLAFPEGIITSGEKALIKFNTWCFEVSSVVQPVSVRVWRPYPWKVSVSVLGSSWWTDLFYFFALPFTVITVEYLPKMERRENESLEEFTARVAETLAGNLKIAVSKFGISDATEAAKRLRTDRERAKKVVVREKTSPRLADPRQMDECAMRIKQSFPSFHLSAIRRDLEKTRSQTTTVNNLKAGKISSSASDGQTGKVTLDAGTWRGVFDNRKWQMIEVNRQKYMNRDS</sequence>
<name>AUP1_CAEEL</name>
<evidence type="ECO:0000250" key="1">
    <source>
        <dbReference type="UniProtKB" id="Q9Y679"/>
    </source>
</evidence>
<evidence type="ECO:0000255" key="2">
    <source>
        <dbReference type="PROSITE-ProRule" id="PRU00468"/>
    </source>
</evidence>
<evidence type="ECO:0000305" key="3"/>
<evidence type="ECO:0000312" key="4">
    <source>
        <dbReference type="WormBase" id="F44B9.5"/>
    </source>
</evidence>
<organism>
    <name type="scientific">Caenorhabditis elegans</name>
    <dbReference type="NCBI Taxonomy" id="6239"/>
    <lineage>
        <taxon>Eukaryota</taxon>
        <taxon>Metazoa</taxon>
        <taxon>Ecdysozoa</taxon>
        <taxon>Nematoda</taxon>
        <taxon>Chromadorea</taxon>
        <taxon>Rhabditida</taxon>
        <taxon>Rhabditina</taxon>
        <taxon>Rhabditomorpha</taxon>
        <taxon>Rhabditoidea</taxon>
        <taxon>Rhabditidae</taxon>
        <taxon>Peloderinae</taxon>
        <taxon>Caenorhabditis</taxon>
    </lineage>
</organism>
<proteinExistence type="inferred from homology"/>